<proteinExistence type="inferred from homology"/>
<organism>
    <name type="scientific">Methanoculleus marisnigri (strain ATCC 35101 / DSM 1498 / JR1)</name>
    <dbReference type="NCBI Taxonomy" id="368407"/>
    <lineage>
        <taxon>Archaea</taxon>
        <taxon>Methanobacteriati</taxon>
        <taxon>Methanobacteriota</taxon>
        <taxon>Stenosarchaea group</taxon>
        <taxon>Methanomicrobia</taxon>
        <taxon>Methanomicrobiales</taxon>
        <taxon>Methanomicrobiaceae</taxon>
        <taxon>Methanoculleus</taxon>
    </lineage>
</organism>
<dbReference type="EC" id="2.4.2.18" evidence="1"/>
<dbReference type="EMBL" id="CP000562">
    <property type="protein sequence ID" value="ABN56008.1"/>
    <property type="molecule type" value="Genomic_DNA"/>
</dbReference>
<dbReference type="RefSeq" id="WP_011842929.1">
    <property type="nucleotide sequence ID" value="NC_009051.1"/>
</dbReference>
<dbReference type="SMR" id="A3CRK8"/>
<dbReference type="STRING" id="368407.Memar_0073"/>
<dbReference type="GeneID" id="4847187"/>
<dbReference type="GeneID" id="76730657"/>
<dbReference type="KEGG" id="mem:Memar_0073"/>
<dbReference type="eggNOG" id="arCOG02012">
    <property type="taxonomic scope" value="Archaea"/>
</dbReference>
<dbReference type="HOGENOM" id="CLU_034315_2_1_2"/>
<dbReference type="OrthoDB" id="8214at2157"/>
<dbReference type="UniPathway" id="UPA00035">
    <property type="reaction ID" value="UER00041"/>
</dbReference>
<dbReference type="Proteomes" id="UP000002146">
    <property type="component" value="Chromosome"/>
</dbReference>
<dbReference type="GO" id="GO:0005829">
    <property type="term" value="C:cytosol"/>
    <property type="evidence" value="ECO:0007669"/>
    <property type="project" value="TreeGrafter"/>
</dbReference>
<dbReference type="GO" id="GO:0004048">
    <property type="term" value="F:anthranilate phosphoribosyltransferase activity"/>
    <property type="evidence" value="ECO:0007669"/>
    <property type="project" value="UniProtKB-UniRule"/>
</dbReference>
<dbReference type="GO" id="GO:0000287">
    <property type="term" value="F:magnesium ion binding"/>
    <property type="evidence" value="ECO:0007669"/>
    <property type="project" value="UniProtKB-UniRule"/>
</dbReference>
<dbReference type="GO" id="GO:0000162">
    <property type="term" value="P:L-tryptophan biosynthetic process"/>
    <property type="evidence" value="ECO:0007669"/>
    <property type="project" value="UniProtKB-UniRule"/>
</dbReference>
<dbReference type="FunFam" id="3.40.1030.10:FF:000002">
    <property type="entry name" value="Anthranilate phosphoribosyltransferase"/>
    <property type="match status" value="1"/>
</dbReference>
<dbReference type="Gene3D" id="3.40.1030.10">
    <property type="entry name" value="Nucleoside phosphorylase/phosphoribosyltransferase catalytic domain"/>
    <property type="match status" value="1"/>
</dbReference>
<dbReference type="Gene3D" id="1.20.970.10">
    <property type="entry name" value="Transferase, Pyrimidine Nucleoside Phosphorylase, Chain C"/>
    <property type="match status" value="1"/>
</dbReference>
<dbReference type="HAMAP" id="MF_00211">
    <property type="entry name" value="TrpD"/>
    <property type="match status" value="1"/>
</dbReference>
<dbReference type="InterPro" id="IPR005940">
    <property type="entry name" value="Anthranilate_Pribosyl_Tfrase"/>
</dbReference>
<dbReference type="InterPro" id="IPR000312">
    <property type="entry name" value="Glycosyl_Trfase_fam3"/>
</dbReference>
<dbReference type="InterPro" id="IPR017459">
    <property type="entry name" value="Glycosyl_Trfase_fam3_N_dom"/>
</dbReference>
<dbReference type="InterPro" id="IPR036320">
    <property type="entry name" value="Glycosyl_Trfase_fam3_N_dom_sf"/>
</dbReference>
<dbReference type="InterPro" id="IPR035902">
    <property type="entry name" value="Nuc_phospho_transferase"/>
</dbReference>
<dbReference type="NCBIfam" id="TIGR01245">
    <property type="entry name" value="trpD"/>
    <property type="match status" value="1"/>
</dbReference>
<dbReference type="PANTHER" id="PTHR43285">
    <property type="entry name" value="ANTHRANILATE PHOSPHORIBOSYLTRANSFERASE"/>
    <property type="match status" value="1"/>
</dbReference>
<dbReference type="PANTHER" id="PTHR43285:SF2">
    <property type="entry name" value="ANTHRANILATE PHOSPHORIBOSYLTRANSFERASE"/>
    <property type="match status" value="1"/>
</dbReference>
<dbReference type="Pfam" id="PF02885">
    <property type="entry name" value="Glycos_trans_3N"/>
    <property type="match status" value="1"/>
</dbReference>
<dbReference type="Pfam" id="PF00591">
    <property type="entry name" value="Glycos_transf_3"/>
    <property type="match status" value="1"/>
</dbReference>
<dbReference type="SUPFAM" id="SSF52418">
    <property type="entry name" value="Nucleoside phosphorylase/phosphoribosyltransferase catalytic domain"/>
    <property type="match status" value="1"/>
</dbReference>
<dbReference type="SUPFAM" id="SSF47648">
    <property type="entry name" value="Nucleoside phosphorylase/phosphoribosyltransferase N-terminal domain"/>
    <property type="match status" value="1"/>
</dbReference>
<sequence>MIREAIARVSSGTDLTPAEAGGVMAEIMHGAATPAQIGGFLTALRMKGETVAEIAAFARAMRAAAVPVALPAPGARVDTCGTGGDGAGTFNISTAAAFVAAGAGVPVVKHGNRGVSSRCGSADVLEALGVSVAIPPDRVGEVLAAAGIAFLFAPAYHPAMQYARIARQEIGIRTVFNLLGPLTNPAGAGAHLLGVYDPCLTLPVARVLGDLGAERAMVVHGAGLDEIATAGPTTVAELRGGEVTTYTLDCTEFGVPRSSVAALRGGGPEENAATLLAVLAGEEGPARDIVLLNAGAAIYLGGKADGIAGGIAHAEASLDSGAALDRLRRLVEATGGAA</sequence>
<feature type="chain" id="PRO_1000043032" description="Anthranilate phosphoribosyltransferase">
    <location>
        <begin position="1"/>
        <end position="338"/>
    </location>
</feature>
<feature type="binding site" evidence="1">
    <location>
        <position position="81"/>
    </location>
    <ligand>
        <name>5-phospho-alpha-D-ribose 1-diphosphate</name>
        <dbReference type="ChEBI" id="CHEBI:58017"/>
    </ligand>
</feature>
<feature type="binding site" evidence="1">
    <location>
        <position position="81"/>
    </location>
    <ligand>
        <name>anthranilate</name>
        <dbReference type="ChEBI" id="CHEBI:16567"/>
        <label>1</label>
    </ligand>
</feature>
<feature type="binding site" evidence="1">
    <location>
        <begin position="84"/>
        <end position="85"/>
    </location>
    <ligand>
        <name>5-phospho-alpha-D-ribose 1-diphosphate</name>
        <dbReference type="ChEBI" id="CHEBI:58017"/>
    </ligand>
</feature>
<feature type="binding site" evidence="1">
    <location>
        <position position="89"/>
    </location>
    <ligand>
        <name>5-phospho-alpha-D-ribose 1-diphosphate</name>
        <dbReference type="ChEBI" id="CHEBI:58017"/>
    </ligand>
</feature>
<feature type="binding site" evidence="1">
    <location>
        <begin position="91"/>
        <end position="94"/>
    </location>
    <ligand>
        <name>5-phospho-alpha-D-ribose 1-diphosphate</name>
        <dbReference type="ChEBI" id="CHEBI:58017"/>
    </ligand>
</feature>
<feature type="binding site" evidence="1">
    <location>
        <position position="93"/>
    </location>
    <ligand>
        <name>Mg(2+)</name>
        <dbReference type="ChEBI" id="CHEBI:18420"/>
        <label>1</label>
    </ligand>
</feature>
<feature type="binding site" evidence="1">
    <location>
        <begin position="109"/>
        <end position="117"/>
    </location>
    <ligand>
        <name>5-phospho-alpha-D-ribose 1-diphosphate</name>
        <dbReference type="ChEBI" id="CHEBI:58017"/>
    </ligand>
</feature>
<feature type="binding site" evidence="1">
    <location>
        <position position="112"/>
    </location>
    <ligand>
        <name>anthranilate</name>
        <dbReference type="ChEBI" id="CHEBI:16567"/>
        <label>1</label>
    </ligand>
</feature>
<feature type="binding site" evidence="1">
    <location>
        <position position="121"/>
    </location>
    <ligand>
        <name>5-phospho-alpha-D-ribose 1-diphosphate</name>
        <dbReference type="ChEBI" id="CHEBI:58017"/>
    </ligand>
</feature>
<feature type="binding site" evidence="1">
    <location>
        <position position="167"/>
    </location>
    <ligand>
        <name>anthranilate</name>
        <dbReference type="ChEBI" id="CHEBI:16567"/>
        <label>2</label>
    </ligand>
</feature>
<feature type="binding site" evidence="1">
    <location>
        <position position="225"/>
    </location>
    <ligand>
        <name>Mg(2+)</name>
        <dbReference type="ChEBI" id="CHEBI:18420"/>
        <label>2</label>
    </ligand>
</feature>
<feature type="binding site" evidence="1">
    <location>
        <position position="226"/>
    </location>
    <ligand>
        <name>Mg(2+)</name>
        <dbReference type="ChEBI" id="CHEBI:18420"/>
        <label>1</label>
    </ligand>
</feature>
<feature type="binding site" evidence="1">
    <location>
        <position position="226"/>
    </location>
    <ligand>
        <name>Mg(2+)</name>
        <dbReference type="ChEBI" id="CHEBI:18420"/>
        <label>2</label>
    </ligand>
</feature>
<keyword id="KW-0028">Amino-acid biosynthesis</keyword>
<keyword id="KW-0057">Aromatic amino acid biosynthesis</keyword>
<keyword id="KW-0328">Glycosyltransferase</keyword>
<keyword id="KW-0460">Magnesium</keyword>
<keyword id="KW-0479">Metal-binding</keyword>
<keyword id="KW-0808">Transferase</keyword>
<keyword id="KW-0822">Tryptophan biosynthesis</keyword>
<protein>
    <recommendedName>
        <fullName evidence="1">Anthranilate phosphoribosyltransferase</fullName>
        <ecNumber evidence="1">2.4.2.18</ecNumber>
    </recommendedName>
</protein>
<evidence type="ECO:0000255" key="1">
    <source>
        <dbReference type="HAMAP-Rule" id="MF_00211"/>
    </source>
</evidence>
<comment type="function">
    <text evidence="1">Catalyzes the transfer of the phosphoribosyl group of 5-phosphorylribose-1-pyrophosphate (PRPP) to anthranilate to yield N-(5'-phosphoribosyl)-anthranilate (PRA).</text>
</comment>
<comment type="catalytic activity">
    <reaction evidence="1">
        <text>N-(5-phospho-beta-D-ribosyl)anthranilate + diphosphate = 5-phospho-alpha-D-ribose 1-diphosphate + anthranilate</text>
        <dbReference type="Rhea" id="RHEA:11768"/>
        <dbReference type="ChEBI" id="CHEBI:16567"/>
        <dbReference type="ChEBI" id="CHEBI:18277"/>
        <dbReference type="ChEBI" id="CHEBI:33019"/>
        <dbReference type="ChEBI" id="CHEBI:58017"/>
        <dbReference type="EC" id="2.4.2.18"/>
    </reaction>
</comment>
<comment type="cofactor">
    <cofactor evidence="1">
        <name>Mg(2+)</name>
        <dbReference type="ChEBI" id="CHEBI:18420"/>
    </cofactor>
    <text evidence="1">Binds 2 magnesium ions per monomer.</text>
</comment>
<comment type="pathway">
    <text evidence="1">Amino-acid biosynthesis; L-tryptophan biosynthesis; L-tryptophan from chorismate: step 2/5.</text>
</comment>
<comment type="subunit">
    <text evidence="1">Homodimer.</text>
</comment>
<comment type="similarity">
    <text evidence="1">Belongs to the anthranilate phosphoribosyltransferase family.</text>
</comment>
<reference key="1">
    <citation type="journal article" date="2009" name="Stand. Genomic Sci.">
        <title>Complete genome sequence of Methanoculleus marisnigri Romesser et al. 1981 type strain JR1.</title>
        <authorList>
            <person name="Anderson I.J."/>
            <person name="Sieprawska-Lupa M."/>
            <person name="Lapidus A."/>
            <person name="Nolan M."/>
            <person name="Copeland A."/>
            <person name="Glavina Del Rio T."/>
            <person name="Tice H."/>
            <person name="Dalin E."/>
            <person name="Barry K."/>
            <person name="Saunders E."/>
            <person name="Han C."/>
            <person name="Brettin T."/>
            <person name="Detter J.C."/>
            <person name="Bruce D."/>
            <person name="Mikhailova N."/>
            <person name="Pitluck S."/>
            <person name="Hauser L."/>
            <person name="Land M."/>
            <person name="Lucas S."/>
            <person name="Richardson P."/>
            <person name="Whitman W.B."/>
            <person name="Kyrpides N.C."/>
        </authorList>
    </citation>
    <scope>NUCLEOTIDE SEQUENCE [LARGE SCALE GENOMIC DNA]</scope>
    <source>
        <strain>ATCC 35101 / DSM 1498 / JR1</strain>
    </source>
</reference>
<name>TRPD_METMJ</name>
<accession>A3CRK8</accession>
<gene>
    <name evidence="1" type="primary">trpD</name>
    <name type="ordered locus">Memar_0073</name>
</gene>